<name>DPS_SHIB3</name>
<proteinExistence type="inferred from homology"/>
<gene>
    <name evidence="1" type="primary">dps</name>
    <name type="ordered locus">SbBS512_E2536</name>
</gene>
<organism>
    <name type="scientific">Shigella boydii serotype 18 (strain CDC 3083-94 / BS512)</name>
    <dbReference type="NCBI Taxonomy" id="344609"/>
    <lineage>
        <taxon>Bacteria</taxon>
        <taxon>Pseudomonadati</taxon>
        <taxon>Pseudomonadota</taxon>
        <taxon>Gammaproteobacteria</taxon>
        <taxon>Enterobacterales</taxon>
        <taxon>Enterobacteriaceae</taxon>
        <taxon>Shigella</taxon>
    </lineage>
</organism>
<sequence>MSTAKLVKSKATNLLYTRNDVSDSEKKATVELLNRQVIQFIDLSLITKQAHWNMRGANFIAVHEMLDGFRTALIDHLDTMAERAVQLGGVALGTTQVINSKTPLKSYPLDIHNVQDHLKELADRYAIVANDVRKAIGEAKDDDTADILTAASRDLDKFLWFIESNIE</sequence>
<protein>
    <recommendedName>
        <fullName evidence="1">DNA protection during starvation protein</fullName>
        <ecNumber evidence="1">1.16.-.-</ecNumber>
    </recommendedName>
</protein>
<dbReference type="EC" id="1.16.-.-" evidence="1"/>
<dbReference type="EMBL" id="CP001063">
    <property type="protein sequence ID" value="ACD08049.1"/>
    <property type="molecule type" value="Genomic_DNA"/>
</dbReference>
<dbReference type="RefSeq" id="WP_000100800.1">
    <property type="nucleotide sequence ID" value="NC_010658.1"/>
</dbReference>
<dbReference type="SMR" id="B2TVB6"/>
<dbReference type="STRING" id="344609.SbBS512_E2536"/>
<dbReference type="GeneID" id="93776616"/>
<dbReference type="KEGG" id="sbc:SbBS512_E2536"/>
<dbReference type="HOGENOM" id="CLU_098183_1_2_6"/>
<dbReference type="Proteomes" id="UP000001030">
    <property type="component" value="Chromosome"/>
</dbReference>
<dbReference type="GO" id="GO:0005737">
    <property type="term" value="C:cytoplasm"/>
    <property type="evidence" value="ECO:0007669"/>
    <property type="project" value="UniProtKB-UniRule"/>
</dbReference>
<dbReference type="GO" id="GO:0009295">
    <property type="term" value="C:nucleoid"/>
    <property type="evidence" value="ECO:0007669"/>
    <property type="project" value="UniProtKB-SubCell"/>
</dbReference>
<dbReference type="GO" id="GO:0003677">
    <property type="term" value="F:DNA binding"/>
    <property type="evidence" value="ECO:0007669"/>
    <property type="project" value="UniProtKB-UniRule"/>
</dbReference>
<dbReference type="GO" id="GO:0008199">
    <property type="term" value="F:ferric iron binding"/>
    <property type="evidence" value="ECO:0007669"/>
    <property type="project" value="UniProtKB-UniRule"/>
</dbReference>
<dbReference type="GO" id="GO:0016722">
    <property type="term" value="F:oxidoreductase activity, acting on metal ions"/>
    <property type="evidence" value="ECO:0007669"/>
    <property type="project" value="InterPro"/>
</dbReference>
<dbReference type="GO" id="GO:0030261">
    <property type="term" value="P:chromosome condensation"/>
    <property type="evidence" value="ECO:0007669"/>
    <property type="project" value="UniProtKB-KW"/>
</dbReference>
<dbReference type="GO" id="GO:0006879">
    <property type="term" value="P:intracellular iron ion homeostasis"/>
    <property type="evidence" value="ECO:0007669"/>
    <property type="project" value="UniProtKB-KW"/>
</dbReference>
<dbReference type="CDD" id="cd01043">
    <property type="entry name" value="DPS"/>
    <property type="match status" value="1"/>
</dbReference>
<dbReference type="FunFam" id="1.20.1260.10:FF:000003">
    <property type="entry name" value="DNA protection during starvation protein"/>
    <property type="match status" value="1"/>
</dbReference>
<dbReference type="Gene3D" id="1.20.1260.10">
    <property type="match status" value="1"/>
</dbReference>
<dbReference type="HAMAP" id="MF_01441">
    <property type="entry name" value="Dps"/>
    <property type="match status" value="1"/>
</dbReference>
<dbReference type="InterPro" id="IPR002177">
    <property type="entry name" value="DPS_DNA-bd"/>
</dbReference>
<dbReference type="InterPro" id="IPR023188">
    <property type="entry name" value="DPS_DNA-bd_CS"/>
</dbReference>
<dbReference type="InterPro" id="IPR023067">
    <property type="entry name" value="Dps_gammaproteobac"/>
</dbReference>
<dbReference type="InterPro" id="IPR012347">
    <property type="entry name" value="Ferritin-like"/>
</dbReference>
<dbReference type="InterPro" id="IPR009078">
    <property type="entry name" value="Ferritin-like_SF"/>
</dbReference>
<dbReference type="InterPro" id="IPR008331">
    <property type="entry name" value="Ferritin_DPS_dom"/>
</dbReference>
<dbReference type="NCBIfam" id="NF006975">
    <property type="entry name" value="PRK09448.1"/>
    <property type="match status" value="1"/>
</dbReference>
<dbReference type="PANTHER" id="PTHR42932:SF3">
    <property type="entry name" value="DNA PROTECTION DURING STARVATION PROTEIN"/>
    <property type="match status" value="1"/>
</dbReference>
<dbReference type="PANTHER" id="PTHR42932">
    <property type="entry name" value="GENERAL STRESS PROTEIN 20U"/>
    <property type="match status" value="1"/>
</dbReference>
<dbReference type="Pfam" id="PF00210">
    <property type="entry name" value="Ferritin"/>
    <property type="match status" value="1"/>
</dbReference>
<dbReference type="PIRSF" id="PIRSF005900">
    <property type="entry name" value="Dps"/>
    <property type="match status" value="1"/>
</dbReference>
<dbReference type="PRINTS" id="PR01346">
    <property type="entry name" value="HELNAPAPROT"/>
</dbReference>
<dbReference type="SUPFAM" id="SSF47240">
    <property type="entry name" value="Ferritin-like"/>
    <property type="match status" value="1"/>
</dbReference>
<dbReference type="PROSITE" id="PS00818">
    <property type="entry name" value="DPS_1"/>
    <property type="match status" value="1"/>
</dbReference>
<dbReference type="PROSITE" id="PS00819">
    <property type="entry name" value="DPS_2"/>
    <property type="match status" value="1"/>
</dbReference>
<feature type="chain" id="PRO_1000145917" description="DNA protection during starvation protein">
    <location>
        <begin position="1"/>
        <end position="167"/>
    </location>
</feature>
<feature type="binding site" evidence="1">
    <location>
        <position position="51"/>
    </location>
    <ligand>
        <name>Fe cation</name>
        <dbReference type="ChEBI" id="CHEBI:24875"/>
        <label>1</label>
        <note>ligand shared between two neighboring subunits</note>
    </ligand>
</feature>
<feature type="binding site" description="in other chain" evidence="1">
    <location>
        <position position="78"/>
    </location>
    <ligand>
        <name>Fe cation</name>
        <dbReference type="ChEBI" id="CHEBI:24875"/>
        <label>1</label>
        <note>ligand shared between two neighboring subunits</note>
    </ligand>
</feature>
<feature type="binding site" description="in other chain" evidence="1">
    <location>
        <position position="82"/>
    </location>
    <ligand>
        <name>Fe cation</name>
        <dbReference type="ChEBI" id="CHEBI:24875"/>
        <label>1</label>
        <note>ligand shared between two neighboring subunits</note>
    </ligand>
</feature>
<feature type="binding site" evidence="1">
    <location>
        <position position="82"/>
    </location>
    <ligand>
        <name>Fe cation</name>
        <dbReference type="ChEBI" id="CHEBI:24875"/>
        <label>2</label>
    </ligand>
</feature>
<accession>B2TVB6</accession>
<reference key="1">
    <citation type="submission" date="2008-05" db="EMBL/GenBank/DDBJ databases">
        <title>Complete sequence of Shigella boydii serotype 18 strain BS512.</title>
        <authorList>
            <person name="Rasko D.A."/>
            <person name="Rosovitz M."/>
            <person name="Maurelli A.T."/>
            <person name="Myers G."/>
            <person name="Seshadri R."/>
            <person name="Cer R."/>
            <person name="Jiang L."/>
            <person name="Ravel J."/>
            <person name="Sebastian Y."/>
        </authorList>
    </citation>
    <scope>NUCLEOTIDE SEQUENCE [LARGE SCALE GENOMIC DNA]</scope>
    <source>
        <strain>CDC 3083-94 / BS512</strain>
    </source>
</reference>
<comment type="function">
    <text evidence="1">During stationary phase, binds the chromosome non-specifically, forming a highly ordered and stable dps-DNA co-crystal within which chromosomal DNA is condensed and protected from diverse damages. It protects DNA from oxidative damage by sequestering intracellular Fe(2+) ion and storing it in the form of Fe(3+) oxyhydroxide mineral, which can be released after reduction. One hydrogen peroxide oxidizes two Fe(2+) ions, which prevents hydroxyl radical production by the Fenton reaction. Dps also protects the cell from UV and gamma irradiation, iron and copper toxicity, thermal stress and acid and base shocks. Also shows a weak catalase activity.</text>
</comment>
<comment type="catalytic activity">
    <reaction evidence="1">
        <text>2 Fe(2+) + H2O2 + 2 H(+) = 2 Fe(3+) + 2 H2O</text>
        <dbReference type="Rhea" id="RHEA:48712"/>
        <dbReference type="ChEBI" id="CHEBI:15377"/>
        <dbReference type="ChEBI" id="CHEBI:15378"/>
        <dbReference type="ChEBI" id="CHEBI:16240"/>
        <dbReference type="ChEBI" id="CHEBI:29033"/>
        <dbReference type="ChEBI" id="CHEBI:29034"/>
    </reaction>
</comment>
<comment type="subunit">
    <text evidence="1">Homododecamer. The 12 subunits form a hollow sphere into which the mineral iron core of up to 500 Fe(3+) can be deposited.</text>
</comment>
<comment type="subcellular location">
    <subcellularLocation>
        <location evidence="1">Cytoplasm</location>
        <location evidence="1">Nucleoid</location>
    </subcellularLocation>
</comment>
<comment type="similarity">
    <text evidence="1">Belongs to the Dps family.</text>
</comment>
<evidence type="ECO:0000255" key="1">
    <source>
        <dbReference type="HAMAP-Rule" id="MF_01441"/>
    </source>
</evidence>
<keyword id="KW-0963">Cytoplasm</keyword>
<keyword id="KW-0226">DNA condensation</keyword>
<keyword id="KW-0238">DNA-binding</keyword>
<keyword id="KW-0408">Iron</keyword>
<keyword id="KW-0409">Iron storage</keyword>
<keyword id="KW-0479">Metal-binding</keyword>
<keyword id="KW-0560">Oxidoreductase</keyword>
<keyword id="KW-1185">Reference proteome</keyword>